<accession>B0BCF5</accession>
<evidence type="ECO:0000255" key="1">
    <source>
        <dbReference type="HAMAP-Rule" id="MF_01333"/>
    </source>
</evidence>
<evidence type="ECO:0000305" key="2"/>
<sequence length="180" mass="20489">MSRLKKLYTEEIRKTLQDKFQYENVMQIPVLKKIVISMGLAEAAKDKNLFQAHLEELAVISGQKPLVTRAKNSIAGFKLREGQGIGAKVTLRGIRMYDFMDRFCNIVSPRIRDFRGFSCKGDGRGCYSLGLDDQQIFPEVDLDRVKRSQGMNITWVTTAQTDAECLTLLECMGLRFKKAQ</sequence>
<comment type="function">
    <text evidence="1">This is one of the proteins that bind and probably mediate the attachment of the 5S RNA into the large ribosomal subunit, where it forms part of the central protuberance. In the 70S ribosome it contacts protein S13 of the 30S subunit (bridge B1b), connecting the 2 subunits; this bridge is implicated in subunit movement. Contacts the P site tRNA; the 5S rRNA and some of its associated proteins might help stabilize positioning of ribosome-bound tRNAs.</text>
</comment>
<comment type="subunit">
    <text evidence="1">Part of the 50S ribosomal subunit; part of the 5S rRNA/L5/L18/L25 subcomplex. Contacts the 5S rRNA and the P site tRNA. Forms a bridge to the 30S subunit in the 70S ribosome.</text>
</comment>
<comment type="similarity">
    <text evidence="1">Belongs to the universal ribosomal protein uL5 family.</text>
</comment>
<name>RL5_CHLTB</name>
<protein>
    <recommendedName>
        <fullName evidence="1">Large ribosomal subunit protein uL5</fullName>
    </recommendedName>
    <alternativeName>
        <fullName evidence="2">50S ribosomal protein L5</fullName>
    </alternativeName>
</protein>
<proteinExistence type="inferred from homology"/>
<keyword id="KW-0687">Ribonucleoprotein</keyword>
<keyword id="KW-0689">Ribosomal protein</keyword>
<keyword id="KW-0694">RNA-binding</keyword>
<keyword id="KW-0699">rRNA-binding</keyword>
<keyword id="KW-0820">tRNA-binding</keyword>
<feature type="chain" id="PRO_1000142374" description="Large ribosomal subunit protein uL5">
    <location>
        <begin position="1"/>
        <end position="180"/>
    </location>
</feature>
<organism>
    <name type="scientific">Chlamydia trachomatis serovar L2b (strain UCH-1/proctitis)</name>
    <dbReference type="NCBI Taxonomy" id="471473"/>
    <lineage>
        <taxon>Bacteria</taxon>
        <taxon>Pseudomonadati</taxon>
        <taxon>Chlamydiota</taxon>
        <taxon>Chlamydiia</taxon>
        <taxon>Chlamydiales</taxon>
        <taxon>Chlamydiaceae</taxon>
        <taxon>Chlamydia/Chlamydophila group</taxon>
        <taxon>Chlamydia</taxon>
    </lineage>
</organism>
<gene>
    <name evidence="1" type="primary">rplE</name>
    <name type="ordered locus">CTLon_0773</name>
</gene>
<reference key="1">
    <citation type="journal article" date="2008" name="Genome Res.">
        <title>Chlamydia trachomatis: genome sequence analysis of lymphogranuloma venereum isolates.</title>
        <authorList>
            <person name="Thomson N.R."/>
            <person name="Holden M.T.G."/>
            <person name="Carder C."/>
            <person name="Lennard N."/>
            <person name="Lockey S.J."/>
            <person name="Marsh P."/>
            <person name="Skipp P."/>
            <person name="O'Connor C.D."/>
            <person name="Goodhead I."/>
            <person name="Norbertzcak H."/>
            <person name="Harris B."/>
            <person name="Ormond D."/>
            <person name="Rance R."/>
            <person name="Quail M.A."/>
            <person name="Parkhill J."/>
            <person name="Stephens R.S."/>
            <person name="Clarke I.N."/>
        </authorList>
    </citation>
    <scope>NUCLEOTIDE SEQUENCE [LARGE SCALE GENOMIC DNA]</scope>
    <source>
        <strain>UCH-1/proctitis</strain>
    </source>
</reference>
<dbReference type="EMBL" id="AM884177">
    <property type="protein sequence ID" value="CAP07170.1"/>
    <property type="molecule type" value="Genomic_DNA"/>
</dbReference>
<dbReference type="RefSeq" id="WP_009873870.1">
    <property type="nucleotide sequence ID" value="NC_010280.2"/>
</dbReference>
<dbReference type="SMR" id="B0BCF5"/>
<dbReference type="KEGG" id="ctl:CTLon_0773"/>
<dbReference type="HOGENOM" id="CLU_061015_2_1_0"/>
<dbReference type="Proteomes" id="UP001154401">
    <property type="component" value="Chromosome"/>
</dbReference>
<dbReference type="GO" id="GO:1990904">
    <property type="term" value="C:ribonucleoprotein complex"/>
    <property type="evidence" value="ECO:0007669"/>
    <property type="project" value="UniProtKB-KW"/>
</dbReference>
<dbReference type="GO" id="GO:0005840">
    <property type="term" value="C:ribosome"/>
    <property type="evidence" value="ECO:0007669"/>
    <property type="project" value="UniProtKB-KW"/>
</dbReference>
<dbReference type="GO" id="GO:0019843">
    <property type="term" value="F:rRNA binding"/>
    <property type="evidence" value="ECO:0007669"/>
    <property type="project" value="UniProtKB-UniRule"/>
</dbReference>
<dbReference type="GO" id="GO:0003735">
    <property type="term" value="F:structural constituent of ribosome"/>
    <property type="evidence" value="ECO:0007669"/>
    <property type="project" value="InterPro"/>
</dbReference>
<dbReference type="GO" id="GO:0000049">
    <property type="term" value="F:tRNA binding"/>
    <property type="evidence" value="ECO:0007669"/>
    <property type="project" value="UniProtKB-UniRule"/>
</dbReference>
<dbReference type="GO" id="GO:0006412">
    <property type="term" value="P:translation"/>
    <property type="evidence" value="ECO:0007669"/>
    <property type="project" value="UniProtKB-UniRule"/>
</dbReference>
<dbReference type="FunFam" id="3.30.1440.10:FF:000001">
    <property type="entry name" value="50S ribosomal protein L5"/>
    <property type="match status" value="1"/>
</dbReference>
<dbReference type="Gene3D" id="3.30.1440.10">
    <property type="match status" value="1"/>
</dbReference>
<dbReference type="HAMAP" id="MF_01333_B">
    <property type="entry name" value="Ribosomal_uL5_B"/>
    <property type="match status" value="1"/>
</dbReference>
<dbReference type="InterPro" id="IPR002132">
    <property type="entry name" value="Ribosomal_uL5"/>
</dbReference>
<dbReference type="InterPro" id="IPR020930">
    <property type="entry name" value="Ribosomal_uL5_bac-type"/>
</dbReference>
<dbReference type="InterPro" id="IPR031309">
    <property type="entry name" value="Ribosomal_uL5_C"/>
</dbReference>
<dbReference type="InterPro" id="IPR020929">
    <property type="entry name" value="Ribosomal_uL5_CS"/>
</dbReference>
<dbReference type="InterPro" id="IPR022803">
    <property type="entry name" value="Ribosomal_uL5_dom_sf"/>
</dbReference>
<dbReference type="InterPro" id="IPR031310">
    <property type="entry name" value="Ribosomal_uL5_N"/>
</dbReference>
<dbReference type="NCBIfam" id="NF000585">
    <property type="entry name" value="PRK00010.1"/>
    <property type="match status" value="1"/>
</dbReference>
<dbReference type="PANTHER" id="PTHR11994">
    <property type="entry name" value="60S RIBOSOMAL PROTEIN L11-RELATED"/>
    <property type="match status" value="1"/>
</dbReference>
<dbReference type="Pfam" id="PF00281">
    <property type="entry name" value="Ribosomal_L5"/>
    <property type="match status" value="1"/>
</dbReference>
<dbReference type="Pfam" id="PF00673">
    <property type="entry name" value="Ribosomal_L5_C"/>
    <property type="match status" value="1"/>
</dbReference>
<dbReference type="PIRSF" id="PIRSF002161">
    <property type="entry name" value="Ribosomal_L5"/>
    <property type="match status" value="1"/>
</dbReference>
<dbReference type="SUPFAM" id="SSF55282">
    <property type="entry name" value="RL5-like"/>
    <property type="match status" value="1"/>
</dbReference>
<dbReference type="PROSITE" id="PS00358">
    <property type="entry name" value="RIBOSOMAL_L5"/>
    <property type="match status" value="1"/>
</dbReference>